<feature type="signal peptide" evidence="4">
    <location>
        <begin position="1"/>
        <end position="33"/>
    </location>
</feature>
<feature type="chain" id="PRO_0000298776" description="Hepatic and glial cell adhesion molecule" evidence="4">
    <location>
        <begin position="34"/>
        <end position="418"/>
    </location>
</feature>
<feature type="topological domain" description="Extracellular" evidence="4">
    <location>
        <begin position="34"/>
        <end position="240"/>
    </location>
</feature>
<feature type="transmembrane region" description="Helical" evidence="4">
    <location>
        <begin position="241"/>
        <end position="261"/>
    </location>
</feature>
<feature type="topological domain" description="Cytoplasmic" evidence="4">
    <location>
        <begin position="262"/>
        <end position="418"/>
    </location>
</feature>
<feature type="domain" description="Ig-like V-type" evidence="4">
    <location>
        <begin position="34"/>
        <end position="141"/>
    </location>
</feature>
<feature type="domain" description="Ig-like C2-type" evidence="4">
    <location>
        <begin position="148"/>
        <end position="234"/>
    </location>
</feature>
<feature type="region of interest" description="Disordered" evidence="6">
    <location>
        <begin position="271"/>
        <end position="418"/>
    </location>
</feature>
<feature type="compositionally biased region" description="Basic and acidic residues" evidence="6">
    <location>
        <begin position="287"/>
        <end position="308"/>
    </location>
</feature>
<feature type="compositionally biased region" description="Low complexity" evidence="6">
    <location>
        <begin position="385"/>
        <end position="400"/>
    </location>
</feature>
<feature type="modified residue" description="Phosphoserine" evidence="3">
    <location>
        <position position="280"/>
    </location>
</feature>
<feature type="modified residue" description="Phosphoserine" evidence="3">
    <location>
        <position position="352"/>
    </location>
</feature>
<feature type="modified residue" description="Phosphoserine" evidence="3">
    <location>
        <position position="379"/>
    </location>
</feature>
<feature type="glycosylation site" description="N-linked (GlcNAc...) asparagine" evidence="4">
    <location>
        <position position="35"/>
    </location>
</feature>
<feature type="glycosylation site" description="N-linked (GlcNAc...) asparagine" evidence="4">
    <location>
        <position position="138"/>
    </location>
</feature>
<feature type="glycosylation site" description="N-linked (GlcNAc...) asparagine" evidence="4">
    <location>
        <position position="167"/>
    </location>
</feature>
<feature type="glycosylation site" description="N-linked (GlcNAc...) asparagine" evidence="4">
    <location>
        <position position="189"/>
    </location>
</feature>
<feature type="disulfide bond" evidence="5">
    <location>
        <begin position="168"/>
        <end position="217"/>
    </location>
</feature>
<feature type="splice variant" id="VSP_052495" description="In isoform 2." evidence="7">
    <original>RSSLYIILSTGG</original>
    <variation>ESPATLPWDSQP</variation>
    <location>
        <begin position="238"/>
        <end position="249"/>
    </location>
</feature>
<feature type="splice variant" id="VSP_052496" description="In isoform 2." evidence="7">
    <location>
        <begin position="250"/>
        <end position="418"/>
    </location>
</feature>
<keyword id="KW-0025">Alternative splicing</keyword>
<keyword id="KW-0130">Cell adhesion</keyword>
<keyword id="KW-0131">Cell cycle</keyword>
<keyword id="KW-1003">Cell membrane</keyword>
<keyword id="KW-0963">Cytoplasm</keyword>
<keyword id="KW-1015">Disulfide bond</keyword>
<keyword id="KW-0325">Glycoprotein</keyword>
<keyword id="KW-0338">Growth arrest</keyword>
<keyword id="KW-0341">Growth regulation</keyword>
<keyword id="KW-0393">Immunoglobulin domain</keyword>
<keyword id="KW-0472">Membrane</keyword>
<keyword id="KW-0597">Phosphoprotein</keyword>
<keyword id="KW-1185">Reference proteome</keyword>
<keyword id="KW-0732">Signal</keyword>
<keyword id="KW-0812">Transmembrane</keyword>
<keyword id="KW-1133">Transmembrane helix</keyword>
<name>HECAM_BOVIN</name>
<proteinExistence type="evidence at transcript level"/>
<reference key="1">
    <citation type="journal article" date="2005" name="BMC Genomics">
        <title>Characterization of 954 bovine full-CDS cDNA sequences.</title>
        <authorList>
            <person name="Harhay G.P."/>
            <person name="Sonstegard T.S."/>
            <person name="Keele J.W."/>
            <person name="Heaton M.P."/>
            <person name="Clawson M.L."/>
            <person name="Snelling W.M."/>
            <person name="Wiedmann R.T."/>
            <person name="Van Tassell C.P."/>
            <person name="Smith T.P.L."/>
        </authorList>
    </citation>
    <scope>NUCLEOTIDE SEQUENCE [LARGE SCALE MRNA] (ISOFORM 2)</scope>
</reference>
<reference evidence="8 9" key="2">
    <citation type="submission" date="2006-09" db="EMBL/GenBank/DDBJ databases">
        <authorList>
            <consortium name="NIH - Mammalian Gene Collection (MGC) project"/>
        </authorList>
    </citation>
    <scope>NUCLEOTIDE SEQUENCE [LARGE SCALE MRNA] (ISOFORM 1)</scope>
    <source>
        <strain evidence="9">Hereford</strain>
        <tissue evidence="9">Thalamus</tissue>
    </source>
</reference>
<dbReference type="EMBL" id="BT021628">
    <property type="protein sequence ID" value="AAX46475.1"/>
    <property type="molecule type" value="mRNA"/>
</dbReference>
<dbReference type="EMBL" id="BC123427">
    <property type="protein sequence ID" value="AAI23428.1"/>
    <property type="molecule type" value="mRNA"/>
</dbReference>
<dbReference type="RefSeq" id="NP_001026929.2">
    <molecule id="A4FUY1-1"/>
    <property type="nucleotide sequence ID" value="NM_001031759.2"/>
</dbReference>
<dbReference type="SMR" id="A4FUY1"/>
<dbReference type="FunCoup" id="A4FUY1">
    <property type="interactions" value="576"/>
</dbReference>
<dbReference type="STRING" id="9913.ENSBTAP00000030280"/>
<dbReference type="GlyCosmos" id="A4FUY1">
    <property type="glycosylation" value="4 sites, No reported glycans"/>
</dbReference>
<dbReference type="GlyGen" id="A4FUY1">
    <property type="glycosylation" value="4 sites"/>
</dbReference>
<dbReference type="PaxDb" id="9913-ENSBTAP00000030280"/>
<dbReference type="GeneID" id="521015"/>
<dbReference type="KEGG" id="bta:521015"/>
<dbReference type="CTD" id="220296"/>
<dbReference type="eggNOG" id="ENOG502QPJB">
    <property type="taxonomic scope" value="Eukaryota"/>
</dbReference>
<dbReference type="HOGENOM" id="CLU_058570_1_0_1"/>
<dbReference type="InParanoid" id="A4FUY1"/>
<dbReference type="OrthoDB" id="9891523at2759"/>
<dbReference type="TreeFam" id="TF331199"/>
<dbReference type="Proteomes" id="UP000009136">
    <property type="component" value="Unplaced"/>
</dbReference>
<dbReference type="GO" id="GO:0005911">
    <property type="term" value="C:cell-cell junction"/>
    <property type="evidence" value="ECO:0000318"/>
    <property type="project" value="GO_Central"/>
</dbReference>
<dbReference type="GO" id="GO:0005737">
    <property type="term" value="C:cytoplasm"/>
    <property type="evidence" value="ECO:0007669"/>
    <property type="project" value="UniProtKB-SubCell"/>
</dbReference>
<dbReference type="GO" id="GO:0005886">
    <property type="term" value="C:plasma membrane"/>
    <property type="evidence" value="ECO:0007669"/>
    <property type="project" value="UniProtKB-SubCell"/>
</dbReference>
<dbReference type="GO" id="GO:0007155">
    <property type="term" value="P:cell adhesion"/>
    <property type="evidence" value="ECO:0007669"/>
    <property type="project" value="UniProtKB-KW"/>
</dbReference>
<dbReference type="GO" id="GO:0006955">
    <property type="term" value="P:immune response"/>
    <property type="evidence" value="ECO:0000318"/>
    <property type="project" value="GO_Central"/>
</dbReference>
<dbReference type="GO" id="GO:0051726">
    <property type="term" value="P:regulation of cell cycle"/>
    <property type="evidence" value="ECO:0007669"/>
    <property type="project" value="UniProtKB-KW"/>
</dbReference>
<dbReference type="FunFam" id="2.60.40.10:FF:000922">
    <property type="entry name" value="hepatocyte cell adhesion molecule isoform X1"/>
    <property type="match status" value="1"/>
</dbReference>
<dbReference type="FunFam" id="2.60.40.10:FF:000786">
    <property type="entry name" value="hepatocyte cell adhesion molecule isoform X2"/>
    <property type="match status" value="1"/>
</dbReference>
<dbReference type="Gene3D" id="2.60.40.10">
    <property type="entry name" value="Immunoglobulins"/>
    <property type="match status" value="2"/>
</dbReference>
<dbReference type="InterPro" id="IPR052280">
    <property type="entry name" value="HEPACAM_domain"/>
</dbReference>
<dbReference type="InterPro" id="IPR007110">
    <property type="entry name" value="Ig-like_dom"/>
</dbReference>
<dbReference type="InterPro" id="IPR036179">
    <property type="entry name" value="Ig-like_dom_sf"/>
</dbReference>
<dbReference type="InterPro" id="IPR013783">
    <property type="entry name" value="Ig-like_fold"/>
</dbReference>
<dbReference type="InterPro" id="IPR003599">
    <property type="entry name" value="Ig_sub"/>
</dbReference>
<dbReference type="InterPro" id="IPR003598">
    <property type="entry name" value="Ig_sub2"/>
</dbReference>
<dbReference type="InterPro" id="IPR013106">
    <property type="entry name" value="Ig_V-set"/>
</dbReference>
<dbReference type="PANTHER" id="PTHR44888">
    <property type="entry name" value="HEPACAM FAMILY MEMBER 2-RELATED"/>
    <property type="match status" value="1"/>
</dbReference>
<dbReference type="PANTHER" id="PTHR44888:SF2">
    <property type="entry name" value="HEPATIC AND GLIAL CELL ADHESION MOLECULE"/>
    <property type="match status" value="1"/>
</dbReference>
<dbReference type="Pfam" id="PF13927">
    <property type="entry name" value="Ig_3"/>
    <property type="match status" value="1"/>
</dbReference>
<dbReference type="Pfam" id="PF07686">
    <property type="entry name" value="V-set"/>
    <property type="match status" value="1"/>
</dbReference>
<dbReference type="SMART" id="SM00409">
    <property type="entry name" value="IG"/>
    <property type="match status" value="2"/>
</dbReference>
<dbReference type="SMART" id="SM00408">
    <property type="entry name" value="IGc2"/>
    <property type="match status" value="1"/>
</dbReference>
<dbReference type="SUPFAM" id="SSF48726">
    <property type="entry name" value="Immunoglobulin"/>
    <property type="match status" value="2"/>
</dbReference>
<dbReference type="PROSITE" id="PS50835">
    <property type="entry name" value="IG_LIKE"/>
    <property type="match status" value="1"/>
</dbReference>
<gene>
    <name evidence="2" type="primary">HEPACAM</name>
</gene>
<evidence type="ECO:0000250" key="1"/>
<evidence type="ECO:0000250" key="2">
    <source>
        <dbReference type="UniProtKB" id="Q14CZ8"/>
    </source>
</evidence>
<evidence type="ECO:0000250" key="3">
    <source>
        <dbReference type="UniProtKB" id="Q640R3"/>
    </source>
</evidence>
<evidence type="ECO:0000255" key="4"/>
<evidence type="ECO:0000255" key="5">
    <source>
        <dbReference type="PROSITE-ProRule" id="PRU00114"/>
    </source>
</evidence>
<evidence type="ECO:0000256" key="6">
    <source>
        <dbReference type="SAM" id="MobiDB-lite"/>
    </source>
</evidence>
<evidence type="ECO:0000303" key="7">
    <source>
    </source>
</evidence>
<evidence type="ECO:0000305" key="8"/>
<evidence type="ECO:0000312" key="9">
    <source>
        <dbReference type="EMBL" id="AAI23428.1"/>
    </source>
</evidence>
<protein>
    <recommendedName>
        <fullName>Hepatic and glial cell adhesion molecule</fullName>
        <shortName>glialCAM</shortName>
    </recommendedName>
    <alternativeName>
        <fullName>Hepatocyte cell adhesion molecule</fullName>
        <shortName>Protein hepaCAM</shortName>
    </alternativeName>
</protein>
<comment type="function">
    <text evidence="2 3">Involved in regulating cell motility and cell-matrix interactions. May inhibit cell growth through suppression of cell proliferation (By similarity). In glia, associates and targets CLCN2 at astrocytic processes and myelinated fiber tracts where it may regulate transcellular chloride flux involved in neuron excitability.</text>
</comment>
<comment type="subunit">
    <text evidence="1 2 3">Homodimer. Dimer formation occurs predominantly through cis interactions on the cell surface (By similarity). Part of a complex containing MLC1, TRPV4, AQP4 and ATP1B1 (By similarity). Interacts with CLCN2.</text>
</comment>
<comment type="subcellular location">
    <subcellularLocation>
        <location>Cytoplasm</location>
    </subcellularLocation>
    <subcellularLocation>
        <location evidence="1">Cell membrane</location>
        <topology evidence="1">Single-pass type I membrane protein</topology>
        <orientation evidence="2">Cytoplasmic side</orientation>
    </subcellularLocation>
    <text evidence="2 3">Colocalizes with CDH1. Colocalizes with CLCN2 at astrocyte end-foot in contact with brain capillaries and other glial cells.</text>
</comment>
<comment type="alternative products">
    <event type="alternative splicing"/>
    <isoform>
        <id>A4FUY1-1</id>
        <name>1</name>
        <sequence type="displayed"/>
    </isoform>
    <isoform>
        <id>A4FUY1-2</id>
        <name>2</name>
        <sequence type="described" ref="VSP_052495 VSP_052496"/>
    </isoform>
</comment>
<comment type="domain">
    <text evidence="2">The cytoplasmic domain plays an important role in regulation of cell-matrix adhesion and cell motility.</text>
</comment>
<comment type="PTM">
    <text evidence="2">N-glycosylated.</text>
</comment>
<accession>A4FUY1</accession>
<accession>Q58DG9</accession>
<organism>
    <name type="scientific">Bos taurus</name>
    <name type="common">Bovine</name>
    <dbReference type="NCBI Taxonomy" id="9913"/>
    <lineage>
        <taxon>Eukaryota</taxon>
        <taxon>Metazoa</taxon>
        <taxon>Chordata</taxon>
        <taxon>Craniata</taxon>
        <taxon>Vertebrata</taxon>
        <taxon>Euteleostomi</taxon>
        <taxon>Mammalia</taxon>
        <taxon>Eutheria</taxon>
        <taxon>Laurasiatheria</taxon>
        <taxon>Artiodactyla</taxon>
        <taxon>Ruminantia</taxon>
        <taxon>Pecora</taxon>
        <taxon>Bovidae</taxon>
        <taxon>Bovinae</taxon>
        <taxon>Bos</taxon>
    </lineage>
</organism>
<sequence length="418" mass="46057">MKREREAPSRAFSALRLAPFVYLLLIQTEPLEGVNITSPVRLIHGTVGKAALLSVQYSSTSSDKPVVKWQLKRDKPVTVVQSIGTEVIGTLRPDYRDRIRLFENGSLLLSDLQLADEGTYEVEISITDDTFTGEKTINLTVDVPISRPQVLVASTTVLELSEAFTLNCSHENGTKPSYTWLKDGKPLLNDSRMLLSPDQKVLTITRVLMEDDDLYSCVVENPISQGRSPPVKITVYRRSSLYIILSTGGIFLLVTLVTVCACWKPSKKSGKKRKLEKQNSMEYMDQSDDRLKPEADTLPRSGEQERKNPMALYILKDKDSPEPEENPASEPRSAAEPGPPGYSVSPAVPGRSPGLPIRSARRYPRSPARSPATGRTHSSPPRAPGSPGRSRSASRTLRTAGVHLIREQDEAGPVEISA</sequence>